<keyword id="KW-0378">Hydrolase</keyword>
<keyword id="KW-0460">Magnesium</keyword>
<keyword id="KW-0479">Metal-binding</keyword>
<keyword id="KW-0546">Nucleotide metabolism</keyword>
<reference key="1">
    <citation type="submission" date="2008-10" db="EMBL/GenBank/DDBJ databases">
        <title>The complete genome sequence of Helicobacter pylori strain P12.</title>
        <authorList>
            <person name="Fischer W."/>
            <person name="Windhager L."/>
            <person name="Karnholz A."/>
            <person name="Zeiller M."/>
            <person name="Zimmer R."/>
            <person name="Haas R."/>
        </authorList>
    </citation>
    <scope>NUCLEOTIDE SEQUENCE [LARGE SCALE GENOMIC DNA]</scope>
    <source>
        <strain>P12</strain>
    </source>
</reference>
<feature type="chain" id="PRO_1000094967" description="Deoxyuridine 5'-triphosphate nucleotidohydrolase">
    <location>
        <begin position="1"/>
        <end position="145"/>
    </location>
</feature>
<feature type="binding site" evidence="1">
    <location>
        <begin position="62"/>
        <end position="64"/>
    </location>
    <ligand>
        <name>substrate</name>
    </ligand>
</feature>
<feature type="binding site" evidence="1">
    <location>
        <position position="75"/>
    </location>
    <ligand>
        <name>substrate</name>
    </ligand>
</feature>
<feature type="binding site" evidence="1">
    <location>
        <begin position="79"/>
        <end position="81"/>
    </location>
    <ligand>
        <name>substrate</name>
    </ligand>
</feature>
<feature type="binding site" evidence="1">
    <location>
        <position position="89"/>
    </location>
    <ligand>
        <name>substrate</name>
    </ligand>
</feature>
<accession>B6JM89</accession>
<protein>
    <recommendedName>
        <fullName evidence="1">Deoxyuridine 5'-triphosphate nucleotidohydrolase</fullName>
        <shortName evidence="1">dUTPase</shortName>
        <ecNumber evidence="1">3.6.1.23</ecNumber>
    </recommendedName>
    <alternativeName>
        <fullName evidence="1">dUTP pyrophosphatase</fullName>
    </alternativeName>
</protein>
<evidence type="ECO:0000255" key="1">
    <source>
        <dbReference type="HAMAP-Rule" id="MF_00116"/>
    </source>
</evidence>
<dbReference type="EC" id="3.6.1.23" evidence="1"/>
<dbReference type="EMBL" id="CP001217">
    <property type="protein sequence ID" value="ACJ08017.1"/>
    <property type="molecule type" value="Genomic_DNA"/>
</dbReference>
<dbReference type="SMR" id="B6JM89"/>
<dbReference type="KEGG" id="hpp:HPP12_0865"/>
<dbReference type="HOGENOM" id="CLU_068508_1_2_7"/>
<dbReference type="UniPathway" id="UPA00610">
    <property type="reaction ID" value="UER00666"/>
</dbReference>
<dbReference type="Proteomes" id="UP000008198">
    <property type="component" value="Chromosome"/>
</dbReference>
<dbReference type="GO" id="GO:0004170">
    <property type="term" value="F:dUTP diphosphatase activity"/>
    <property type="evidence" value="ECO:0007669"/>
    <property type="project" value="UniProtKB-UniRule"/>
</dbReference>
<dbReference type="GO" id="GO:0000287">
    <property type="term" value="F:magnesium ion binding"/>
    <property type="evidence" value="ECO:0007669"/>
    <property type="project" value="UniProtKB-UniRule"/>
</dbReference>
<dbReference type="GO" id="GO:0006226">
    <property type="term" value="P:dUMP biosynthetic process"/>
    <property type="evidence" value="ECO:0007669"/>
    <property type="project" value="UniProtKB-UniRule"/>
</dbReference>
<dbReference type="GO" id="GO:0046081">
    <property type="term" value="P:dUTP catabolic process"/>
    <property type="evidence" value="ECO:0007669"/>
    <property type="project" value="InterPro"/>
</dbReference>
<dbReference type="CDD" id="cd07557">
    <property type="entry name" value="trimeric_dUTPase"/>
    <property type="match status" value="1"/>
</dbReference>
<dbReference type="FunFam" id="2.70.40.10:FF:000013">
    <property type="entry name" value="Deoxyuridine 5'-triphosphate nucleotidohydrolase"/>
    <property type="match status" value="1"/>
</dbReference>
<dbReference type="Gene3D" id="2.70.40.10">
    <property type="match status" value="1"/>
</dbReference>
<dbReference type="HAMAP" id="MF_00116">
    <property type="entry name" value="dUTPase_bact"/>
    <property type="match status" value="1"/>
</dbReference>
<dbReference type="InterPro" id="IPR008181">
    <property type="entry name" value="dUTPase"/>
</dbReference>
<dbReference type="InterPro" id="IPR029054">
    <property type="entry name" value="dUTPase-like"/>
</dbReference>
<dbReference type="InterPro" id="IPR036157">
    <property type="entry name" value="dUTPase-like_sf"/>
</dbReference>
<dbReference type="InterPro" id="IPR033704">
    <property type="entry name" value="dUTPase_trimeric"/>
</dbReference>
<dbReference type="NCBIfam" id="TIGR00576">
    <property type="entry name" value="dut"/>
    <property type="match status" value="1"/>
</dbReference>
<dbReference type="NCBIfam" id="NF001862">
    <property type="entry name" value="PRK00601.1"/>
    <property type="match status" value="1"/>
</dbReference>
<dbReference type="PANTHER" id="PTHR11241">
    <property type="entry name" value="DEOXYURIDINE 5'-TRIPHOSPHATE NUCLEOTIDOHYDROLASE"/>
    <property type="match status" value="1"/>
</dbReference>
<dbReference type="PANTHER" id="PTHR11241:SF0">
    <property type="entry name" value="DEOXYURIDINE 5'-TRIPHOSPHATE NUCLEOTIDOHYDROLASE"/>
    <property type="match status" value="1"/>
</dbReference>
<dbReference type="Pfam" id="PF00692">
    <property type="entry name" value="dUTPase"/>
    <property type="match status" value="1"/>
</dbReference>
<dbReference type="SUPFAM" id="SSF51283">
    <property type="entry name" value="dUTPase-like"/>
    <property type="match status" value="1"/>
</dbReference>
<name>DUT_HELP2</name>
<sequence length="145" mass="15785">MKIKIQKIHPNALIPKYQTEGSSGFDLHAVEEVTIKPHSVGLVKIGICLSLEVGYELQVRTRSGLALNHQVMVLNSPGTVDNDYRGEIKVILANLSDKDFKVQVGDRIAQGVVQKTYKAEFIECEQLDETSRGSGGFGSTGVSKA</sequence>
<organism>
    <name type="scientific">Helicobacter pylori (strain P12)</name>
    <dbReference type="NCBI Taxonomy" id="570508"/>
    <lineage>
        <taxon>Bacteria</taxon>
        <taxon>Pseudomonadati</taxon>
        <taxon>Campylobacterota</taxon>
        <taxon>Epsilonproteobacteria</taxon>
        <taxon>Campylobacterales</taxon>
        <taxon>Helicobacteraceae</taxon>
        <taxon>Helicobacter</taxon>
    </lineage>
</organism>
<gene>
    <name evidence="1" type="primary">dut</name>
    <name type="ordered locus">HPP12_0865</name>
</gene>
<proteinExistence type="inferred from homology"/>
<comment type="function">
    <text evidence="1">This enzyme is involved in nucleotide metabolism: it produces dUMP, the immediate precursor of thymidine nucleotides and it decreases the intracellular concentration of dUTP so that uracil cannot be incorporated into DNA.</text>
</comment>
<comment type="catalytic activity">
    <reaction evidence="1">
        <text>dUTP + H2O = dUMP + diphosphate + H(+)</text>
        <dbReference type="Rhea" id="RHEA:10248"/>
        <dbReference type="ChEBI" id="CHEBI:15377"/>
        <dbReference type="ChEBI" id="CHEBI:15378"/>
        <dbReference type="ChEBI" id="CHEBI:33019"/>
        <dbReference type="ChEBI" id="CHEBI:61555"/>
        <dbReference type="ChEBI" id="CHEBI:246422"/>
        <dbReference type="EC" id="3.6.1.23"/>
    </reaction>
</comment>
<comment type="cofactor">
    <cofactor evidence="1">
        <name>Mg(2+)</name>
        <dbReference type="ChEBI" id="CHEBI:18420"/>
    </cofactor>
</comment>
<comment type="pathway">
    <text evidence="1">Pyrimidine metabolism; dUMP biosynthesis; dUMP from dCTP (dUTP route): step 2/2.</text>
</comment>
<comment type="similarity">
    <text evidence="1">Belongs to the dUTPase family.</text>
</comment>